<name>LSPA_ECOLI</name>
<evidence type="ECO:0000255" key="1">
    <source>
        <dbReference type="HAMAP-Rule" id="MF_00161"/>
    </source>
</evidence>
<evidence type="ECO:0000269" key="2">
    <source>
    </source>
</evidence>
<evidence type="ECO:0000269" key="3">
    <source>
    </source>
</evidence>
<evidence type="ECO:0000269" key="4">
    <source>
    </source>
</evidence>
<evidence type="ECO:0000269" key="5">
    <source>
    </source>
</evidence>
<evidence type="ECO:0000269" key="6">
    <source>
    </source>
</evidence>
<evidence type="ECO:0000305" key="7"/>
<evidence type="ECO:0000305" key="8">
    <source>
    </source>
</evidence>
<comment type="function">
    <text evidence="1 4 5 6">This protein specifically catalyzes the removal of signal peptides from prolipoproteins.</text>
</comment>
<comment type="catalytic activity">
    <reaction evidence="1 4">
        <text>Release of signal peptides from bacterial membrane prolipoproteins. Hydrolyzes -Xaa-Yaa-Zaa-|-(S,diacylglyceryl)Cys-, in which Xaa is hydrophobic (preferably Leu), and Yaa (Ala or Ser) and Zaa (Gly or Ala) have small, neutral side chains.</text>
        <dbReference type="EC" id="3.4.23.36"/>
    </reaction>
</comment>
<comment type="activity regulation">
    <text evidence="4">Enzyme activity is inhibited by globomycin, a cyclic peptide antibiotic.</text>
</comment>
<comment type="biophysicochemical properties">
    <phDependence>
        <text evidence="4">Optimum pH is 7.9.</text>
    </phDependence>
    <temperatureDependence>
        <text evidence="4">Optimum temperature is 37-45 degrees Celsius.</text>
    </temperatureDependence>
</comment>
<comment type="pathway">
    <text evidence="1">Protein modification; lipoprotein biosynthesis (signal peptide cleavage).</text>
</comment>
<comment type="subcellular location">
    <subcellularLocation>
        <location evidence="1 2 3 4">Cell inner membrane</location>
        <topology evidence="1 3 4">Multi-pass membrane protein</topology>
    </subcellularLocation>
</comment>
<comment type="similarity">
    <text evidence="1 7">Belongs to the peptidase A8 family.</text>
</comment>
<keyword id="KW-0064">Aspartyl protease</keyword>
<keyword id="KW-0997">Cell inner membrane</keyword>
<keyword id="KW-1003">Cell membrane</keyword>
<keyword id="KW-0378">Hydrolase</keyword>
<keyword id="KW-0472">Membrane</keyword>
<keyword id="KW-0645">Protease</keyword>
<keyword id="KW-1185">Reference proteome</keyword>
<keyword id="KW-0812">Transmembrane</keyword>
<keyword id="KW-1133">Transmembrane helix</keyword>
<gene>
    <name evidence="1" type="primary">lspA</name>
    <name type="synonym">lsp</name>
    <name type="ordered locus">b0027</name>
    <name type="ordered locus">JW0025</name>
</gene>
<proteinExistence type="evidence at protein level"/>
<feature type="chain" id="PRO_0000178778" description="Lipoprotein signal peptidase">
    <location>
        <begin position="1"/>
        <end position="164"/>
    </location>
</feature>
<feature type="topological domain" description="Cytoplasmic" evidence="3">
    <location>
        <begin position="1"/>
        <end position="11"/>
    </location>
</feature>
<feature type="transmembrane region" description="Helical" evidence="8">
    <location>
        <begin position="12"/>
        <end position="26"/>
    </location>
</feature>
<feature type="topological domain" description="Periplasmic" evidence="3">
    <location>
        <begin position="27"/>
        <end position="69"/>
    </location>
</feature>
<feature type="transmembrane region" description="Helical" evidence="8">
    <location>
        <begin position="70"/>
        <end position="88"/>
    </location>
</feature>
<feature type="topological domain" description="Cytoplasmic" evidence="3">
    <location>
        <begin position="89"/>
        <end position="95"/>
    </location>
</feature>
<feature type="transmembrane region" description="Helical" evidence="8">
    <location>
        <begin position="96"/>
        <end position="113"/>
    </location>
</feature>
<feature type="topological domain" description="Periplasmic" evidence="3">
    <location>
        <begin position="114"/>
        <end position="141"/>
    </location>
</feature>
<feature type="transmembrane region" description="Helical" evidence="8">
    <location>
        <begin position="142"/>
        <end position="159"/>
    </location>
</feature>
<feature type="topological domain" description="Cytoplasmic" evidence="2 3">
    <location>
        <begin position="160"/>
        <end position="164"/>
    </location>
</feature>
<feature type="active site" evidence="1">
    <location>
        <position position="123"/>
    </location>
</feature>
<feature type="active site" evidence="1">
    <location>
        <position position="141"/>
    </location>
</feature>
<accession>P00804</accession>
<sequence length="164" mass="18156">MSQSICSTGLRWLWLVVVVLIIDLGSKYLILQNFALGDTVPLFPSLNLHYARNYGAAFSFLADSGGWQRWFFAGIAIGISVILAVMMYRSKATQKLNNIAYALIIGGALGNLFDRLWHGFVVDMIDFYVGDWHFATFNLADTAICVGAALIVLEGFLPSRAKKQ</sequence>
<dbReference type="EC" id="3.4.23.36" evidence="1 4"/>
<dbReference type="EMBL" id="X00776">
    <property type="protein sequence ID" value="CAA25353.1"/>
    <property type="molecule type" value="Genomic_DNA"/>
</dbReference>
<dbReference type="EMBL" id="K01990">
    <property type="protein sequence ID" value="AAA24092.1"/>
    <property type="molecule type" value="Genomic_DNA"/>
</dbReference>
<dbReference type="EMBL" id="U00096">
    <property type="protein sequence ID" value="AAC73138.1"/>
    <property type="molecule type" value="Genomic_DNA"/>
</dbReference>
<dbReference type="EMBL" id="AP009048">
    <property type="protein sequence ID" value="BAB96596.1"/>
    <property type="molecule type" value="Genomic_DNA"/>
</dbReference>
<dbReference type="EMBL" id="X54945">
    <property type="protein sequence ID" value="CAA38705.1"/>
    <property type="molecule type" value="Genomic_DNA"/>
</dbReference>
<dbReference type="PIR" id="C64723">
    <property type="entry name" value="ZPECL"/>
</dbReference>
<dbReference type="RefSeq" id="NP_414568.1">
    <property type="nucleotide sequence ID" value="NC_000913.3"/>
</dbReference>
<dbReference type="RefSeq" id="WP_000083372.1">
    <property type="nucleotide sequence ID" value="NZ_LN832404.1"/>
</dbReference>
<dbReference type="SMR" id="P00804"/>
<dbReference type="BioGRID" id="4259402">
    <property type="interactions" value="214"/>
</dbReference>
<dbReference type="DIP" id="DIP-10129N"/>
<dbReference type="FunCoup" id="P00804">
    <property type="interactions" value="508"/>
</dbReference>
<dbReference type="STRING" id="511145.b0027"/>
<dbReference type="MEROPS" id="A08.001"/>
<dbReference type="PaxDb" id="511145-b0027"/>
<dbReference type="EnsemblBacteria" id="AAC73138">
    <property type="protein sequence ID" value="AAC73138"/>
    <property type="gene ID" value="b0027"/>
</dbReference>
<dbReference type="GeneID" id="93777409"/>
<dbReference type="GeneID" id="944800"/>
<dbReference type="KEGG" id="ecj:JW0025"/>
<dbReference type="KEGG" id="eco:b0027"/>
<dbReference type="KEGG" id="ecoc:C3026_00130"/>
<dbReference type="PATRIC" id="fig|1411691.4.peg.2258"/>
<dbReference type="EchoBASE" id="EB0543"/>
<dbReference type="eggNOG" id="COG0597">
    <property type="taxonomic scope" value="Bacteria"/>
</dbReference>
<dbReference type="HOGENOM" id="CLU_083252_4_0_6"/>
<dbReference type="InParanoid" id="P00804"/>
<dbReference type="OMA" id="NRWYFPA"/>
<dbReference type="OrthoDB" id="9810259at2"/>
<dbReference type="PhylomeDB" id="P00804"/>
<dbReference type="BioCyc" id="EcoCyc:EG10548-MONOMER"/>
<dbReference type="BioCyc" id="MetaCyc:EG10548-MONOMER"/>
<dbReference type="UniPathway" id="UPA00665"/>
<dbReference type="PRO" id="PR:P00804"/>
<dbReference type="Proteomes" id="UP000000625">
    <property type="component" value="Chromosome"/>
</dbReference>
<dbReference type="GO" id="GO:0005886">
    <property type="term" value="C:plasma membrane"/>
    <property type="evidence" value="ECO:0000314"/>
    <property type="project" value="EcoCyc"/>
</dbReference>
<dbReference type="GO" id="GO:0004190">
    <property type="term" value="F:aspartic-type endopeptidase activity"/>
    <property type="evidence" value="ECO:0007669"/>
    <property type="project" value="UniProtKB-UniRule"/>
</dbReference>
<dbReference type="GO" id="GO:0004175">
    <property type="term" value="F:endopeptidase activity"/>
    <property type="evidence" value="ECO:0000314"/>
    <property type="project" value="EcoCyc"/>
</dbReference>
<dbReference type="GO" id="GO:0006508">
    <property type="term" value="P:proteolysis"/>
    <property type="evidence" value="ECO:0007669"/>
    <property type="project" value="UniProtKB-KW"/>
</dbReference>
<dbReference type="HAMAP" id="MF_00161">
    <property type="entry name" value="LspA"/>
    <property type="match status" value="1"/>
</dbReference>
<dbReference type="InterPro" id="IPR001872">
    <property type="entry name" value="Peptidase_A8"/>
</dbReference>
<dbReference type="NCBIfam" id="TIGR00077">
    <property type="entry name" value="lspA"/>
    <property type="match status" value="1"/>
</dbReference>
<dbReference type="PANTHER" id="PTHR33695">
    <property type="entry name" value="LIPOPROTEIN SIGNAL PEPTIDASE"/>
    <property type="match status" value="1"/>
</dbReference>
<dbReference type="PANTHER" id="PTHR33695:SF1">
    <property type="entry name" value="LIPOPROTEIN SIGNAL PEPTIDASE"/>
    <property type="match status" value="1"/>
</dbReference>
<dbReference type="Pfam" id="PF01252">
    <property type="entry name" value="Peptidase_A8"/>
    <property type="match status" value="1"/>
</dbReference>
<dbReference type="PRINTS" id="PR00781">
    <property type="entry name" value="LIPOSIGPTASE"/>
</dbReference>
<dbReference type="PROSITE" id="PS00855">
    <property type="entry name" value="SPASE_II"/>
    <property type="match status" value="1"/>
</dbReference>
<protein>
    <recommendedName>
        <fullName evidence="1">Lipoprotein signal peptidase</fullName>
        <ecNumber evidence="1 4">3.4.23.36</ecNumber>
    </recommendedName>
    <alternativeName>
        <fullName evidence="1">Prolipoprotein signal peptidase</fullName>
    </alternativeName>
    <alternativeName>
        <fullName evidence="1">Signal peptidase II</fullName>
        <shortName evidence="1">SPase II</shortName>
    </alternativeName>
</protein>
<organism>
    <name type="scientific">Escherichia coli (strain K12)</name>
    <dbReference type="NCBI Taxonomy" id="83333"/>
    <lineage>
        <taxon>Bacteria</taxon>
        <taxon>Pseudomonadati</taxon>
        <taxon>Pseudomonadota</taxon>
        <taxon>Gammaproteobacteria</taxon>
        <taxon>Enterobacterales</taxon>
        <taxon>Enterobacteriaceae</taxon>
        <taxon>Escherichia</taxon>
    </lineage>
</organism>
<reference key="1">
    <citation type="journal article" date="1984" name="FEBS Lett.">
        <title>Nucleotide sequence of the lspA gene, the structural gene for lipoprotein signal peptidase of Escherichia coli.</title>
        <authorList>
            <person name="Yu F."/>
            <person name="Yamada H."/>
            <person name="Daishima K."/>
            <person name="Mizushima S."/>
        </authorList>
    </citation>
    <scope>NUCLEOTIDE SEQUENCE [GENOMIC DNA]</scope>
    <scope>FUNCTION</scope>
</reference>
<reference key="2">
    <citation type="journal article" date="1984" name="Proc. Natl. Acad. Sci. U.S.A.">
        <title>Nucleotide sequence of the Escherichia coli prolipoprotein signal peptidase (lsp) gene.</title>
        <authorList>
            <person name="Innis M.A."/>
            <person name="Tokunaga M."/>
            <person name="Williams M.E."/>
            <person name="Loranger J.M."/>
            <person name="Chang S.-Y."/>
            <person name="Chang S."/>
            <person name="Wu H.C."/>
        </authorList>
    </citation>
    <scope>NUCLEOTIDE SEQUENCE [GENOMIC DNA]</scope>
    <scope>FUNCTION</scope>
    <source>
        <strain>K12</strain>
    </source>
</reference>
<reference key="3">
    <citation type="journal article" date="1992" name="Nucleic Acids Res.">
        <title>Systematic sequencing of the Escherichia coli genome: analysis of the 0-2.4 min region.</title>
        <authorList>
            <person name="Yura T."/>
            <person name="Mori H."/>
            <person name="Nagai H."/>
            <person name="Nagata T."/>
            <person name="Ishihama A."/>
            <person name="Fujita N."/>
            <person name="Isono K."/>
            <person name="Mizobuchi K."/>
            <person name="Nakata A."/>
        </authorList>
    </citation>
    <scope>NUCLEOTIDE SEQUENCE [LARGE SCALE GENOMIC DNA]</scope>
    <source>
        <strain>K12</strain>
    </source>
</reference>
<reference key="4">
    <citation type="journal article" date="1997" name="Science">
        <title>The complete genome sequence of Escherichia coli K-12.</title>
        <authorList>
            <person name="Blattner F.R."/>
            <person name="Plunkett G. III"/>
            <person name="Bloch C.A."/>
            <person name="Perna N.T."/>
            <person name="Burland V."/>
            <person name="Riley M."/>
            <person name="Collado-Vides J."/>
            <person name="Glasner J.D."/>
            <person name="Rode C.K."/>
            <person name="Mayhew G.F."/>
            <person name="Gregor J."/>
            <person name="Davis N.W."/>
            <person name="Kirkpatrick H.A."/>
            <person name="Goeden M.A."/>
            <person name="Rose D.J."/>
            <person name="Mau B."/>
            <person name="Shao Y."/>
        </authorList>
    </citation>
    <scope>NUCLEOTIDE SEQUENCE [LARGE SCALE GENOMIC DNA]</scope>
    <source>
        <strain>K12 / MG1655 / ATCC 47076</strain>
    </source>
</reference>
<reference key="5">
    <citation type="journal article" date="2006" name="Mol. Syst. Biol.">
        <title>Highly accurate genome sequences of Escherichia coli K-12 strains MG1655 and W3110.</title>
        <authorList>
            <person name="Hayashi K."/>
            <person name="Morooka N."/>
            <person name="Yamamoto Y."/>
            <person name="Fujita K."/>
            <person name="Isono K."/>
            <person name="Choi S."/>
            <person name="Ohtsubo E."/>
            <person name="Baba T."/>
            <person name="Wanner B.L."/>
            <person name="Mori H."/>
            <person name="Horiuchi T."/>
        </authorList>
    </citation>
    <scope>NUCLEOTIDE SEQUENCE [LARGE SCALE GENOMIC DNA]</scope>
    <source>
        <strain>K12 / W3110 / ATCC 27325 / DSM 5911</strain>
    </source>
</reference>
<reference key="6">
    <citation type="journal article" date="1991" name="Nucleic Acids Res.">
        <title>Nucleotide sequence of the lsp-dapB interval in Escherichia coli.</title>
        <authorList>
            <person name="Bouvier J."/>
            <person name="Stragier P."/>
        </authorList>
    </citation>
    <scope>NUCLEOTIDE SEQUENCE [GENOMIC DNA] OF 159-164</scope>
    <source>
        <strain>K12</strain>
    </source>
</reference>
<reference key="7">
    <citation type="journal article" date="1984" name="J. Biol. Chem.">
        <title>Prolipoprotein modification and processing enzymes in Escherichia coli.</title>
        <authorList>
            <person name="Tokunaga M."/>
            <person name="Loranger J.M."/>
            <person name="Wu H.C."/>
        </authorList>
    </citation>
    <scope>FUNCTION</scope>
    <scope>CATALYTIC ACTIVITY</scope>
    <scope>ACTIVITY REGULATION</scope>
    <scope>BIOPHYSICOCHEMICAL PROPERTIES</scope>
    <scope>SUBCELLULAR LOCATION</scope>
</reference>
<reference key="8">
    <citation type="journal article" date="1991" name="J. Biol. Chem.">
        <title>Membrane topology of Escherichia coli prolipoprotein signal peptidase (signal peptidase II).</title>
        <authorList>
            <person name="Munoa F.J."/>
            <person name="Miller K.W."/>
            <person name="Beers R."/>
            <person name="Graham M."/>
            <person name="Wu H.C."/>
        </authorList>
    </citation>
    <scope>TOPOLOGY</scope>
    <scope>SUBCELLULAR LOCATION</scope>
</reference>
<reference key="9">
    <citation type="journal article" date="2005" name="Science">
        <title>Global topology analysis of the Escherichia coli inner membrane proteome.</title>
        <authorList>
            <person name="Daley D.O."/>
            <person name="Rapp M."/>
            <person name="Granseth E."/>
            <person name="Melen K."/>
            <person name="Drew D."/>
            <person name="von Heijne G."/>
        </authorList>
    </citation>
    <scope>TOPOLOGY [LARGE SCALE ANALYSIS]</scope>
    <scope>SUBCELLULAR LOCATION</scope>
    <source>
        <strain>K12 / MG1655 / ATCC 47076</strain>
    </source>
</reference>